<keyword id="KW-0963">Cytoplasm</keyword>
<keyword id="KW-0378">Hydrolase</keyword>
<keyword id="KW-0694">RNA-binding</keyword>
<keyword id="KW-0820">tRNA-binding</keyword>
<comment type="function">
    <text evidence="1">An aminoacyl-tRNA editing enzyme that deacylates mischarged D-aminoacyl-tRNAs. Also deacylates mischarged glycyl-tRNA(Ala), protecting cells against glycine mischarging by AlaRS. Acts via tRNA-based rather than protein-based catalysis; rejects L-amino acids rather than detecting D-amino acids in the active site. By recycling D-aminoacyl-tRNA to D-amino acids and free tRNA molecules, this enzyme counteracts the toxicity associated with the formation of D-aminoacyl-tRNA entities in vivo and helps enforce protein L-homochirality.</text>
</comment>
<comment type="catalytic activity">
    <reaction evidence="1">
        <text>glycyl-tRNA(Ala) + H2O = tRNA(Ala) + glycine + H(+)</text>
        <dbReference type="Rhea" id="RHEA:53744"/>
        <dbReference type="Rhea" id="RHEA-COMP:9657"/>
        <dbReference type="Rhea" id="RHEA-COMP:13640"/>
        <dbReference type="ChEBI" id="CHEBI:15377"/>
        <dbReference type="ChEBI" id="CHEBI:15378"/>
        <dbReference type="ChEBI" id="CHEBI:57305"/>
        <dbReference type="ChEBI" id="CHEBI:78442"/>
        <dbReference type="ChEBI" id="CHEBI:78522"/>
        <dbReference type="EC" id="3.1.1.96"/>
    </reaction>
</comment>
<comment type="catalytic activity">
    <reaction evidence="1">
        <text>a D-aminoacyl-tRNA + H2O = a tRNA + a D-alpha-amino acid + H(+)</text>
        <dbReference type="Rhea" id="RHEA:13953"/>
        <dbReference type="Rhea" id="RHEA-COMP:10123"/>
        <dbReference type="Rhea" id="RHEA-COMP:10124"/>
        <dbReference type="ChEBI" id="CHEBI:15377"/>
        <dbReference type="ChEBI" id="CHEBI:15378"/>
        <dbReference type="ChEBI" id="CHEBI:59871"/>
        <dbReference type="ChEBI" id="CHEBI:78442"/>
        <dbReference type="ChEBI" id="CHEBI:79333"/>
        <dbReference type="EC" id="3.1.1.96"/>
    </reaction>
</comment>
<comment type="subunit">
    <text evidence="1">Homodimer.</text>
</comment>
<comment type="subcellular location">
    <subcellularLocation>
        <location evidence="1">Cytoplasm</location>
    </subcellularLocation>
</comment>
<comment type="domain">
    <text evidence="1">A Gly-cisPro motif from one monomer fits into the active site of the other monomer to allow specific chiral rejection of L-amino acids.</text>
</comment>
<comment type="similarity">
    <text evidence="1">Belongs to the DTD family.</text>
</comment>
<organism>
    <name type="scientific">Thermotoga neapolitana (strain ATCC 49049 / DSM 4359 / NBRC 107923 / NS-E)</name>
    <dbReference type="NCBI Taxonomy" id="309803"/>
    <lineage>
        <taxon>Bacteria</taxon>
        <taxon>Thermotogati</taxon>
        <taxon>Thermotogota</taxon>
        <taxon>Thermotogae</taxon>
        <taxon>Thermotogales</taxon>
        <taxon>Thermotogaceae</taxon>
        <taxon>Thermotoga</taxon>
    </lineage>
</organism>
<feature type="chain" id="PRO_1000146219" description="D-aminoacyl-tRNA deacylase">
    <location>
        <begin position="1"/>
        <end position="149"/>
    </location>
</feature>
<feature type="short sequence motif" description="Gly-cisPro motif, important for rejection of L-amino acids" evidence="1">
    <location>
        <begin position="137"/>
        <end position="138"/>
    </location>
</feature>
<name>DTD_THENN</name>
<accession>B9KAP7</accession>
<evidence type="ECO:0000255" key="1">
    <source>
        <dbReference type="HAMAP-Rule" id="MF_00518"/>
    </source>
</evidence>
<proteinExistence type="inferred from homology"/>
<reference key="1">
    <citation type="submission" date="2007-11" db="EMBL/GenBank/DDBJ databases">
        <title>The genome sequence of the hyperthermophilic bacterium Thermotoga neapolitana.</title>
        <authorList>
            <person name="Lim S.K."/>
            <person name="Kim J.S."/>
            <person name="Cha S.H."/>
            <person name="Park B.C."/>
            <person name="Lee D.S."/>
            <person name="Tae H.S."/>
            <person name="Kim S.-J."/>
            <person name="Kim J.J."/>
            <person name="Park K.J."/>
            <person name="Lee S.Y."/>
        </authorList>
    </citation>
    <scope>NUCLEOTIDE SEQUENCE [LARGE SCALE GENOMIC DNA]</scope>
    <source>
        <strain>ATCC 49049 / DSM 4359 / NBRC 107923 / NS-E</strain>
    </source>
</reference>
<protein>
    <recommendedName>
        <fullName evidence="1">D-aminoacyl-tRNA deacylase</fullName>
        <shortName evidence="1">DTD</shortName>
        <ecNumber evidence="1">3.1.1.96</ecNumber>
    </recommendedName>
    <alternativeName>
        <fullName evidence="1">Gly-tRNA(Ala) deacylase</fullName>
    </alternativeName>
</protein>
<dbReference type="EC" id="3.1.1.96" evidence="1"/>
<dbReference type="EMBL" id="CP000916">
    <property type="protein sequence ID" value="ACM24030.1"/>
    <property type="molecule type" value="Genomic_DNA"/>
</dbReference>
<dbReference type="RefSeq" id="WP_015920266.1">
    <property type="nucleotide sequence ID" value="NC_011978.1"/>
</dbReference>
<dbReference type="SMR" id="B9KAP7"/>
<dbReference type="STRING" id="309803.CTN_1854"/>
<dbReference type="KEGG" id="tna:CTN_1854"/>
<dbReference type="eggNOG" id="COG1490">
    <property type="taxonomic scope" value="Bacteria"/>
</dbReference>
<dbReference type="HOGENOM" id="CLU_076901_1_0_0"/>
<dbReference type="Proteomes" id="UP000000445">
    <property type="component" value="Chromosome"/>
</dbReference>
<dbReference type="GO" id="GO:0005737">
    <property type="term" value="C:cytoplasm"/>
    <property type="evidence" value="ECO:0007669"/>
    <property type="project" value="UniProtKB-SubCell"/>
</dbReference>
<dbReference type="GO" id="GO:0051500">
    <property type="term" value="F:D-tyrosyl-tRNA(Tyr) deacylase activity"/>
    <property type="evidence" value="ECO:0007669"/>
    <property type="project" value="TreeGrafter"/>
</dbReference>
<dbReference type="GO" id="GO:0106026">
    <property type="term" value="F:Gly-tRNA(Ala) deacylase activity"/>
    <property type="evidence" value="ECO:0007669"/>
    <property type="project" value="UniProtKB-UniRule"/>
</dbReference>
<dbReference type="GO" id="GO:0043908">
    <property type="term" value="F:Ser(Gly)-tRNA(Ala) hydrolase activity"/>
    <property type="evidence" value="ECO:0007669"/>
    <property type="project" value="UniProtKB-UniRule"/>
</dbReference>
<dbReference type="GO" id="GO:0000049">
    <property type="term" value="F:tRNA binding"/>
    <property type="evidence" value="ECO:0007669"/>
    <property type="project" value="UniProtKB-UniRule"/>
</dbReference>
<dbReference type="GO" id="GO:0019478">
    <property type="term" value="P:D-amino acid catabolic process"/>
    <property type="evidence" value="ECO:0007669"/>
    <property type="project" value="UniProtKB-UniRule"/>
</dbReference>
<dbReference type="CDD" id="cd00563">
    <property type="entry name" value="Dtyr_deacylase"/>
    <property type="match status" value="1"/>
</dbReference>
<dbReference type="FunFam" id="3.50.80.10:FF:000001">
    <property type="entry name" value="D-aminoacyl-tRNA deacylase"/>
    <property type="match status" value="1"/>
</dbReference>
<dbReference type="Gene3D" id="3.50.80.10">
    <property type="entry name" value="D-tyrosyl-tRNA(Tyr) deacylase"/>
    <property type="match status" value="1"/>
</dbReference>
<dbReference type="HAMAP" id="MF_00518">
    <property type="entry name" value="Deacylase_Dtd"/>
    <property type="match status" value="1"/>
</dbReference>
<dbReference type="InterPro" id="IPR003732">
    <property type="entry name" value="Daa-tRNA_deacyls_DTD"/>
</dbReference>
<dbReference type="InterPro" id="IPR023509">
    <property type="entry name" value="DTD-like_sf"/>
</dbReference>
<dbReference type="NCBIfam" id="TIGR00256">
    <property type="entry name" value="D-aminoacyl-tRNA deacylase"/>
    <property type="match status" value="1"/>
</dbReference>
<dbReference type="PANTHER" id="PTHR10472:SF5">
    <property type="entry name" value="D-AMINOACYL-TRNA DEACYLASE 1"/>
    <property type="match status" value="1"/>
</dbReference>
<dbReference type="PANTHER" id="PTHR10472">
    <property type="entry name" value="D-TYROSYL-TRNA TYR DEACYLASE"/>
    <property type="match status" value="1"/>
</dbReference>
<dbReference type="Pfam" id="PF02580">
    <property type="entry name" value="Tyr_Deacylase"/>
    <property type="match status" value="1"/>
</dbReference>
<dbReference type="SUPFAM" id="SSF69500">
    <property type="entry name" value="DTD-like"/>
    <property type="match status" value="1"/>
</dbReference>
<sequence>MRAVVQRVNEAKVIVDEKVVGAIGKGLLVFVGVGKDDTEKDCEWLAEKVSGLRIFEDEEGKMNLSIMDVGGEVLVVSQFTLYGDCRRGKRPSFTEAAPPEKGKELYEKFVDLLEKKGLKVEKGIFRAHMHVHLVNDGPVTLLLDSSRLF</sequence>
<gene>
    <name evidence="1" type="primary">dtd</name>
    <name type="ordered locus">CTN_1854</name>
</gene>